<keyword id="KW-0150">Chloroplast</keyword>
<keyword id="KW-0507">mRNA processing</keyword>
<keyword id="KW-0934">Plastid</keyword>
<keyword id="KW-0694">RNA-binding</keyword>
<keyword id="KW-0819">tRNA processing</keyword>
<reference key="1">
    <citation type="journal article" date="2004" name="Mol. Phylogenet. Evol.">
        <title>Phylogeny of Iris based on chloroplast matK gene and trnK intron sequence data.</title>
        <authorList>
            <person name="Wilson C.A."/>
        </authorList>
    </citation>
    <scope>NUCLEOTIDE SEQUENCE [GENOMIC DNA]</scope>
</reference>
<evidence type="ECO:0000255" key="1">
    <source>
        <dbReference type="HAMAP-Rule" id="MF_01390"/>
    </source>
</evidence>
<name>MATK_IRISE</name>
<geneLocation type="chloroplast"/>
<proteinExistence type="inferred from homology"/>
<gene>
    <name evidence="1" type="primary">matK</name>
</gene>
<protein>
    <recommendedName>
        <fullName evidence="1">Maturase K</fullName>
    </recommendedName>
    <alternativeName>
        <fullName evidence="1">Intron maturase</fullName>
    </alternativeName>
</protein>
<accession>Q5GF62</accession>
<feature type="chain" id="PRO_0000143439" description="Maturase K">
    <location>
        <begin position="1"/>
        <end position="526"/>
    </location>
</feature>
<dbReference type="EMBL" id="AY596644">
    <property type="protein sequence ID" value="AAW67443.1"/>
    <property type="molecule type" value="Genomic_DNA"/>
</dbReference>
<dbReference type="GO" id="GO:0009507">
    <property type="term" value="C:chloroplast"/>
    <property type="evidence" value="ECO:0007669"/>
    <property type="project" value="UniProtKB-SubCell"/>
</dbReference>
<dbReference type="GO" id="GO:0003723">
    <property type="term" value="F:RNA binding"/>
    <property type="evidence" value="ECO:0007669"/>
    <property type="project" value="UniProtKB-KW"/>
</dbReference>
<dbReference type="GO" id="GO:0006397">
    <property type="term" value="P:mRNA processing"/>
    <property type="evidence" value="ECO:0007669"/>
    <property type="project" value="UniProtKB-KW"/>
</dbReference>
<dbReference type="GO" id="GO:0008380">
    <property type="term" value="P:RNA splicing"/>
    <property type="evidence" value="ECO:0007669"/>
    <property type="project" value="UniProtKB-UniRule"/>
</dbReference>
<dbReference type="GO" id="GO:0008033">
    <property type="term" value="P:tRNA processing"/>
    <property type="evidence" value="ECO:0007669"/>
    <property type="project" value="UniProtKB-KW"/>
</dbReference>
<dbReference type="HAMAP" id="MF_01390">
    <property type="entry name" value="MatK"/>
    <property type="match status" value="1"/>
</dbReference>
<dbReference type="InterPro" id="IPR024937">
    <property type="entry name" value="Domain_X"/>
</dbReference>
<dbReference type="InterPro" id="IPR002866">
    <property type="entry name" value="Maturase_MatK"/>
</dbReference>
<dbReference type="InterPro" id="IPR024942">
    <property type="entry name" value="Maturase_MatK_N"/>
</dbReference>
<dbReference type="PANTHER" id="PTHR34811">
    <property type="entry name" value="MATURASE K"/>
    <property type="match status" value="1"/>
</dbReference>
<dbReference type="PANTHER" id="PTHR34811:SF1">
    <property type="entry name" value="MATURASE K"/>
    <property type="match status" value="1"/>
</dbReference>
<dbReference type="Pfam" id="PF01348">
    <property type="entry name" value="Intron_maturas2"/>
    <property type="match status" value="1"/>
</dbReference>
<dbReference type="Pfam" id="PF01824">
    <property type="entry name" value="MatK_N"/>
    <property type="match status" value="1"/>
</dbReference>
<organism>
    <name type="scientific">Iris setosa</name>
    <name type="common">Hiougi-ayame</name>
    <name type="synonym">Beachhead iris</name>
    <dbReference type="NCBI Taxonomy" id="198825"/>
    <lineage>
        <taxon>Eukaryota</taxon>
        <taxon>Viridiplantae</taxon>
        <taxon>Streptophyta</taxon>
        <taxon>Embryophyta</taxon>
        <taxon>Tracheophyta</taxon>
        <taxon>Spermatophyta</taxon>
        <taxon>Magnoliopsida</taxon>
        <taxon>Liliopsida</taxon>
        <taxon>Asparagales</taxon>
        <taxon>Iridaceae</taxon>
        <taxon>Iridoideae</taxon>
        <taxon>Irideae</taxon>
        <taxon>Iris</taxon>
    </lineage>
</organism>
<comment type="function">
    <text evidence="1">Usually encoded in the trnK tRNA gene intron. Probably assists in splicing its own and other chloroplast group II introns.</text>
</comment>
<comment type="subcellular location">
    <subcellularLocation>
        <location>Plastid</location>
        <location>Chloroplast</location>
    </subcellularLocation>
</comment>
<comment type="similarity">
    <text evidence="1">Belongs to the intron maturase 2 family. MatK subfamily.</text>
</comment>
<sequence length="526" mass="62826">MEELQGYLEKDRSRQQPFLYPLLFQEYIYALAHNHNRGLKGSLFYEPTEVFGYDSKSSLALAKRLIIRIYQQNDFLSVVNDSNKNRFVSHHRYNFCYSHFYSQMISEGFAILVEIPFSLRLVSYFEKKEIPKSHNLRSIHSIFPFLEDKLLHLNYVSDIRIPHPIHMEILVQILQCWIQDVPLLHFLRFFLHKYHNWNWNSFLITPKKSIYVFSKENKRLFRFLYNSYVSECEFLLVFLRKQSSYLRLTSFGLFLERRHFYVKIKRLQMQHLILIVVCRDYFQKALXXXXXXXXXXXRCQGKVVLAPKGTHLLMKKCKYNFVTLWQYYFHFWYQSYRIHINQLSNYSFYFLGYLSSLLKNSSTVRNQMLENSFLVDTVTNKLETLVPVIFLIGSLSKAQFCTVSGHPISKPIWADLPDSEIIERFGRMCRNLSHYHSGSSKKQGLYRIKYILRLSCARTLARKHKSTVRAFLRRLGSGLLEEFFTEEEQVLSLILPKTIPFTFYGSHKERIWYLDIIRINDLVNHS</sequence>